<feature type="chain" id="PRO_0000218912" description="SUN domain-containing protein 1">
    <location>
        <begin position="1"/>
        <end position="913"/>
    </location>
</feature>
<feature type="topological domain" description="Nuclear">
    <location>
        <begin position="1"/>
        <end position="415"/>
    </location>
</feature>
<feature type="transmembrane region" description="Helical">
    <location>
        <begin position="416"/>
        <end position="436"/>
    </location>
</feature>
<feature type="topological domain" description="Perinuclear space">
    <location>
        <begin position="437"/>
        <end position="913"/>
    </location>
</feature>
<feature type="domain" description="SUN" evidence="5">
    <location>
        <begin position="751"/>
        <end position="912"/>
    </location>
</feature>
<feature type="region of interest" description="LMNA-binding" evidence="20">
    <location>
        <begin position="1"/>
        <end position="139"/>
    </location>
</feature>
<feature type="region of interest" description="Disordered" evidence="6">
    <location>
        <begin position="69"/>
        <end position="120"/>
    </location>
</feature>
<feature type="region of interest" description="SYNE2-binding" evidence="20">
    <location>
        <begin position="209"/>
        <end position="302"/>
    </location>
</feature>
<feature type="region of interest" description="EMD-binding" evidence="20">
    <location>
        <begin position="223"/>
        <end position="302"/>
    </location>
</feature>
<feature type="region of interest" description="Disordered" evidence="6">
    <location>
        <begin position="456"/>
        <end position="485"/>
    </location>
</feature>
<feature type="region of interest" description="Sufficient for interaction with SYNE1 and SYNE2" evidence="3">
    <location>
        <begin position="703"/>
        <end position="913"/>
    </location>
</feature>
<feature type="coiled-coil region" evidence="4">
    <location>
        <begin position="491"/>
        <end position="533"/>
    </location>
</feature>
<feature type="coiled-coil region" evidence="4">
    <location>
        <begin position="563"/>
        <end position="638"/>
    </location>
</feature>
<feature type="compositionally biased region" description="Polar residues" evidence="6">
    <location>
        <begin position="69"/>
        <end position="81"/>
    </location>
</feature>
<feature type="compositionally biased region" description="Low complexity" evidence="6">
    <location>
        <begin position="108"/>
        <end position="120"/>
    </location>
</feature>
<feature type="modified residue" description="Phosphoserine" evidence="1">
    <location>
        <position position="48"/>
    </location>
</feature>
<feature type="modified residue" description="Phosphoserine" evidence="35">
    <location>
        <position position="66"/>
    </location>
</feature>
<feature type="modified residue" description="Phosphoserine" evidence="1">
    <location>
        <position position="139"/>
    </location>
</feature>
<feature type="disulfide bond" description="Interchain (with KASH domain-containing nesprins)" evidence="3">
    <location>
        <position position="759"/>
    </location>
</feature>
<feature type="splice variant" id="VSP_039552" description="In isoform 4." evidence="30">
    <original>RGVSFYLDRTLWLAKSTSSSFASFIVQLFQVVLMKLNFETYKLKGYESRAYESQSYETKSHESEA</original>
    <variation>P</variation>
    <location>
        <begin position="221"/>
        <end position="285"/>
    </location>
</feature>
<feature type="splice variant" id="VSP_058699" description="In isoform 5." evidence="31">
    <location>
        <begin position="222"/>
        <end position="377"/>
    </location>
</feature>
<feature type="splice variant" id="VSP_009346" description="In isoform 2." evidence="29">
    <location>
        <begin position="222"/>
        <end position="344"/>
    </location>
</feature>
<feature type="splice variant" id="VSP_009347" description="In isoform 3." evidence="29">
    <location>
        <begin position="308"/>
        <end position="344"/>
    </location>
</feature>
<feature type="sequence conflict" description="In Ref. 1; AAT90501." evidence="32" ref="1">
    <original>L</original>
    <variation>V</variation>
    <location>
        <position position="6"/>
    </location>
</feature>
<feature type="sequence conflict" description="In Ref. 3; BAE39733." evidence="32" ref="3">
    <original>L</original>
    <variation>P</variation>
    <location>
        <position position="108"/>
    </location>
</feature>
<feature type="sequence conflict" description="In Ref. 1; AAT90501." evidence="32" ref="1">
    <original>F</original>
    <variation>L</variation>
    <location>
        <position position="439"/>
    </location>
</feature>
<feature type="sequence conflict" description="In Ref. 3; BAE35723." evidence="32" ref="3">
    <original>H</original>
    <variation>N</variation>
    <location>
        <position position="479"/>
    </location>
</feature>
<feature type="sequence conflict" description="In Ref. 3; BAE39733." evidence="32" ref="3">
    <original>D</original>
    <variation>G</variation>
    <location>
        <position position="505"/>
    </location>
</feature>
<feature type="sequence conflict" description="In Ref. 3; BAE39733." evidence="32" ref="3">
    <original>E</original>
    <variation>A</variation>
    <location>
        <position position="593"/>
    </location>
</feature>
<feature type="sequence conflict" description="In Ref. 3; BAE39733." evidence="32" ref="3">
    <original>S</original>
    <variation>F</variation>
    <location>
        <position position="704"/>
    </location>
</feature>
<feature type="sequence conflict" description="In Ref. 6; AAK13526." evidence="32" ref="6">
    <original>QP</original>
    <variation>AA</variation>
    <location>
        <begin position="856"/>
        <end position="857"/>
    </location>
</feature>
<feature type="helix" evidence="36">
    <location>
        <begin position="673"/>
        <end position="698"/>
    </location>
</feature>
<feature type="helix" evidence="36">
    <location>
        <begin position="704"/>
        <end position="713"/>
    </location>
</feature>
<feature type="helix" evidence="36">
    <location>
        <begin position="721"/>
        <end position="734"/>
    </location>
</feature>
<feature type="helix" evidence="36">
    <location>
        <begin position="748"/>
        <end position="750"/>
    </location>
</feature>
<feature type="helix" evidence="36">
    <location>
        <begin position="756"/>
        <end position="758"/>
    </location>
</feature>
<feature type="strand" evidence="36">
    <location>
        <begin position="766"/>
        <end position="770"/>
    </location>
</feature>
<feature type="strand" evidence="36">
    <location>
        <begin position="774"/>
        <end position="780"/>
    </location>
</feature>
<feature type="helix" evidence="36">
    <location>
        <begin position="784"/>
        <end position="788"/>
    </location>
</feature>
<feature type="strand" evidence="36">
    <location>
        <begin position="789"/>
        <end position="791"/>
    </location>
</feature>
<feature type="strand" evidence="36">
    <location>
        <begin position="798"/>
        <end position="801"/>
    </location>
</feature>
<feature type="strand" evidence="36">
    <location>
        <begin position="805"/>
        <end position="823"/>
    </location>
</feature>
<feature type="helix" evidence="36">
    <location>
        <begin position="827"/>
        <end position="829"/>
    </location>
</feature>
<feature type="strand" evidence="36">
    <location>
        <begin position="841"/>
        <end position="849"/>
    </location>
</feature>
<feature type="strand" evidence="36">
    <location>
        <begin position="856"/>
        <end position="862"/>
    </location>
</feature>
<feature type="strand" evidence="36">
    <location>
        <begin position="869"/>
        <end position="874"/>
    </location>
</feature>
<feature type="strand" evidence="36">
    <location>
        <begin position="883"/>
        <end position="890"/>
    </location>
</feature>
<feature type="strand" evidence="36">
    <location>
        <begin position="893"/>
        <end position="895"/>
    </location>
</feature>
<feature type="strand" evidence="36">
    <location>
        <begin position="897"/>
        <end position="902"/>
    </location>
</feature>
<feature type="strand" evidence="36">
    <location>
        <begin position="904"/>
        <end position="911"/>
    </location>
</feature>
<organism>
    <name type="scientific">Mus musculus</name>
    <name type="common">Mouse</name>
    <dbReference type="NCBI Taxonomy" id="10090"/>
    <lineage>
        <taxon>Eukaryota</taxon>
        <taxon>Metazoa</taxon>
        <taxon>Chordata</taxon>
        <taxon>Craniata</taxon>
        <taxon>Vertebrata</taxon>
        <taxon>Euteleostomi</taxon>
        <taxon>Mammalia</taxon>
        <taxon>Eutheria</taxon>
        <taxon>Euarchontoglires</taxon>
        <taxon>Glires</taxon>
        <taxon>Rodentia</taxon>
        <taxon>Myomorpha</taxon>
        <taxon>Muroidea</taxon>
        <taxon>Muridae</taxon>
        <taxon>Murinae</taxon>
        <taxon>Mus</taxon>
        <taxon>Mus</taxon>
    </lineage>
</organism>
<sequence>MDFSRLHTYTPPQCVPENTGYTYALSSSYSSDALDFETEHKLEPVFDSPRMSRRSLRLVTTASYSSGDSQAIDSHISTSRATPAKGRETRTVKQRRSASKPAFSINHLSGKGLSSSTSHDSSCSLRSATVLRHPVLDESLIREQTKVDHFWGLDDDGDLKGGNKAATQGNGELAAEVASSNGYTCRDCRMLSARTDALTAHSAIHGTTSRVYSRDRTLKPRGVSFYLDRTLWLAKSTSSSFASFIVQLFQVVLMKLNFETYKLKGYESRAYESQSYETKSHESEAHLGHCGRMTAGELSRVDGESLCDDCKGKKHLEIHTATHSQLPQPHRVAGAMGRLCIYTGDLLVQALRRTRAAGWSVAEAVWSVLWLAVSAPGKAASGTFWWLGSGWYQFVTLISWLNVFLLTRCLRNICKVFVLLLPLLLLLGAGVSLWGQGNFFSLLPVLNWTAMQPTQRVDDSKGMHRPGPLPPSPPPKVDHKASQWPQESDMGQKVASLSAQCHNHDERLAELTVLLQKLQIRVDQVDDGREGLSLWVKNVVGQHLQEMGTIEPPDAKTDFMTFHHDHEVRLSNLEDVLRKLTEKSEAIQKELEETKLKAGSRDEEQPLLDRVQHLELELNLLKSQLSDWQHLKTSCEQAGARIQETVQLMFSEDQQGGSLEWLLEKLSSRFVSKDELQVLLHDLELKLLQNITHHITVTGQAPTSEAIVSAVNQAGISGITEAQAHIIVNNALKLYSQDKTGMVDFALESGGGSILSTRCSETYETKTALLSLFGVPLWYFSQSPRVVIQPDIYPGNCWAFKGSQGYLVVRLSMKIYPTTFTMEHIPKTLSPTGNISSAPKDFAVYGLETEYQEEGQPLGRFTYDQEGDSLQMFHTLERPDQAFQIVELRVLSNWGHPEYTCLYRFRVHGEPIQ</sequence>
<protein>
    <recommendedName>
        <fullName evidence="32">SUN domain-containing protein 1</fullName>
    </recommendedName>
    <alternativeName>
        <fullName>Protein unc-84 homolog A</fullName>
    </alternativeName>
    <alternativeName>
        <fullName>Sad1/unc-84 protein-like 1</fullName>
    </alternativeName>
</protein>
<name>SUN1_MOUSE</name>
<gene>
    <name evidence="34" type="primary">Sun1</name>
    <name type="synonym">Unc84a</name>
</gene>
<dbReference type="EMBL" id="AY682989">
    <property type="protein sequence ID" value="AAT90501.1"/>
    <property type="molecule type" value="mRNA"/>
</dbReference>
<dbReference type="EMBL" id="HQ402597">
    <property type="protein sequence ID" value="ADP89697.1"/>
    <property type="molecule type" value="mRNA"/>
</dbReference>
<dbReference type="EMBL" id="AK014585">
    <property type="protein sequence ID" value="BAB29445.1"/>
    <property type="molecule type" value="mRNA"/>
</dbReference>
<dbReference type="EMBL" id="AK036187">
    <property type="protein sequence ID" value="BAC29339.1"/>
    <property type="molecule type" value="mRNA"/>
</dbReference>
<dbReference type="EMBL" id="AK160281">
    <property type="protein sequence ID" value="BAE35723.1"/>
    <property type="molecule type" value="mRNA"/>
</dbReference>
<dbReference type="EMBL" id="AK167686">
    <property type="protein sequence ID" value="BAE39733.1"/>
    <property type="molecule type" value="mRNA"/>
</dbReference>
<dbReference type="EMBL" id="AC125065">
    <property type="status" value="NOT_ANNOTATED_CDS"/>
    <property type="molecule type" value="Genomic_DNA"/>
</dbReference>
<dbReference type="EMBL" id="BC030330">
    <property type="protein sequence ID" value="AAH30330.1"/>
    <property type="status" value="ALT_INIT"/>
    <property type="molecule type" value="mRNA"/>
</dbReference>
<dbReference type="EMBL" id="BC047928">
    <property type="protein sequence ID" value="AAH47928.1"/>
    <property type="molecule type" value="mRNA"/>
</dbReference>
<dbReference type="EMBL" id="BC048156">
    <property type="protein sequence ID" value="AAH48156.1"/>
    <property type="molecule type" value="mRNA"/>
</dbReference>
<dbReference type="EMBL" id="AF343752">
    <property type="protein sequence ID" value="AAK13526.1"/>
    <property type="molecule type" value="mRNA"/>
</dbReference>
<dbReference type="CCDS" id="CCDS19804.1">
    <molecule id="Q9D666-1"/>
</dbReference>
<dbReference type="CCDS" id="CCDS57395.1">
    <molecule id="Q9D666-3"/>
</dbReference>
<dbReference type="CCDS" id="CCDS57396.1">
    <molecule id="Q9D666-4"/>
</dbReference>
<dbReference type="CCDS" id="CCDS57397.1">
    <molecule id="Q9D666-2"/>
</dbReference>
<dbReference type="CCDS" id="CCDS57398.1">
    <molecule id="Q9D666-5"/>
</dbReference>
<dbReference type="RefSeq" id="NP_001243044.1">
    <molecule id="Q9D666-3"/>
    <property type="nucleotide sequence ID" value="NM_001256115.1"/>
</dbReference>
<dbReference type="RefSeq" id="NP_001243045.1">
    <molecule id="Q9D666-4"/>
    <property type="nucleotide sequence ID" value="NM_001256116.2"/>
</dbReference>
<dbReference type="RefSeq" id="NP_001243046.1">
    <molecule id="Q9D666-2"/>
    <property type="nucleotide sequence ID" value="NM_001256117.1"/>
</dbReference>
<dbReference type="RefSeq" id="NP_001243047.1">
    <molecule id="Q9D666-5"/>
    <property type="nucleotide sequence ID" value="NM_001256118.1"/>
</dbReference>
<dbReference type="RefSeq" id="NP_077771.1">
    <molecule id="Q9D666-1"/>
    <property type="nucleotide sequence ID" value="NM_024451.2"/>
</dbReference>
<dbReference type="RefSeq" id="XP_036021488.1">
    <molecule id="Q9D666-1"/>
    <property type="nucleotide sequence ID" value="XM_036165595.1"/>
</dbReference>
<dbReference type="PDB" id="5YWZ">
    <property type="method" value="X-ray"/>
    <property type="resolution" value="2.20 A"/>
    <property type="chains" value="A=672-913"/>
</dbReference>
<dbReference type="PDBsum" id="5YWZ"/>
<dbReference type="SMR" id="Q9D666"/>
<dbReference type="BioGRID" id="218484">
    <property type="interactions" value="9"/>
</dbReference>
<dbReference type="DIP" id="DIP-60732N"/>
<dbReference type="FunCoup" id="Q9D666">
    <property type="interactions" value="2722"/>
</dbReference>
<dbReference type="IntAct" id="Q9D666">
    <property type="interactions" value="7"/>
</dbReference>
<dbReference type="MINT" id="Q9D666"/>
<dbReference type="STRING" id="10090.ENSMUSP00000056655"/>
<dbReference type="GlyConnect" id="2744">
    <property type="glycosylation" value="2 N-Linked glycans (1 site)"/>
</dbReference>
<dbReference type="GlyCosmos" id="Q9D666">
    <property type="glycosylation" value="1 site, 2 glycans"/>
</dbReference>
<dbReference type="GlyGen" id="Q9D666">
    <property type="glycosylation" value="4 sites, 4 N-linked glycans (2 sites), 1 O-linked glycan (1 site)"/>
</dbReference>
<dbReference type="iPTMnet" id="Q9D666"/>
<dbReference type="PhosphoSitePlus" id="Q9D666"/>
<dbReference type="SwissPalm" id="Q9D666"/>
<dbReference type="PaxDb" id="10090-ENSMUSP00000056655"/>
<dbReference type="PeptideAtlas" id="Q9D666"/>
<dbReference type="ProteomicsDB" id="258773">
    <molecule id="Q9D666-1"/>
</dbReference>
<dbReference type="ProteomicsDB" id="258774">
    <molecule id="Q9D666-2"/>
</dbReference>
<dbReference type="ProteomicsDB" id="258775">
    <molecule id="Q9D666-3"/>
</dbReference>
<dbReference type="ProteomicsDB" id="258776">
    <molecule id="Q9D666-4"/>
</dbReference>
<dbReference type="ProteomicsDB" id="258777">
    <molecule id="Q9D666-5"/>
</dbReference>
<dbReference type="Pumba" id="Q9D666"/>
<dbReference type="Antibodypedia" id="1893">
    <property type="antibodies" value="116 antibodies from 26 providers"/>
</dbReference>
<dbReference type="DNASU" id="77053"/>
<dbReference type="Ensembl" id="ENSMUST00000058716.14">
    <molecule id="Q9D666-1"/>
    <property type="protein sequence ID" value="ENSMUSP00000056655.8"/>
    <property type="gene ID" value="ENSMUSG00000036817.15"/>
</dbReference>
<dbReference type="Ensembl" id="ENSMUST00000078690.13">
    <molecule id="Q9D666-4"/>
    <property type="protein sequence ID" value="ENSMUSP00000077756.7"/>
    <property type="gene ID" value="ENSMUSG00000036817.15"/>
</dbReference>
<dbReference type="Ensembl" id="ENSMUST00000110882.8">
    <molecule id="Q9D666-5"/>
    <property type="protein sequence ID" value="ENSMUSP00000106506.2"/>
    <property type="gene ID" value="ENSMUSG00000036817.15"/>
</dbReference>
<dbReference type="Ensembl" id="ENSMUST00000110883.9">
    <molecule id="Q9D666-2"/>
    <property type="protein sequence ID" value="ENSMUSP00000106507.3"/>
    <property type="gene ID" value="ENSMUSG00000036817.15"/>
</dbReference>
<dbReference type="Ensembl" id="ENSMUST00000110884.9">
    <molecule id="Q9D666-3"/>
    <property type="protein sequence ID" value="ENSMUSP00000106508.3"/>
    <property type="gene ID" value="ENSMUSG00000036817.15"/>
</dbReference>
<dbReference type="GeneID" id="77053"/>
<dbReference type="KEGG" id="mmu:77053"/>
<dbReference type="UCSC" id="uc009agb.2">
    <molecule id="Q9D666-1"/>
    <property type="organism name" value="mouse"/>
</dbReference>
<dbReference type="UCSC" id="uc009agc.2">
    <molecule id="Q9D666-3"/>
    <property type="organism name" value="mouse"/>
</dbReference>
<dbReference type="UCSC" id="uc009agd.2">
    <molecule id="Q9D666-2"/>
    <property type="organism name" value="mouse"/>
</dbReference>
<dbReference type="UCSC" id="uc009age.2">
    <molecule id="Q9D666-4"/>
    <property type="organism name" value="mouse"/>
</dbReference>
<dbReference type="UCSC" id="uc012efr.2">
    <property type="organism name" value="mouse"/>
</dbReference>
<dbReference type="AGR" id="MGI:1924303"/>
<dbReference type="CTD" id="23353"/>
<dbReference type="MGI" id="MGI:1924303">
    <property type="gene designation" value="Sun1"/>
</dbReference>
<dbReference type="VEuPathDB" id="HostDB:ENSMUSG00000036817"/>
<dbReference type="eggNOG" id="KOG2687">
    <property type="taxonomic scope" value="Eukaryota"/>
</dbReference>
<dbReference type="GeneTree" id="ENSGT00940000155830"/>
<dbReference type="InParanoid" id="Q9D666"/>
<dbReference type="OMA" id="IYTPPQC"/>
<dbReference type="OrthoDB" id="342281at2759"/>
<dbReference type="PhylomeDB" id="Q9D666"/>
<dbReference type="TreeFam" id="TF323915"/>
<dbReference type="BioGRID-ORCS" id="77053">
    <property type="hits" value="3 hits in 76 CRISPR screens"/>
</dbReference>
<dbReference type="ChiTaRS" id="Sun1">
    <property type="organism name" value="mouse"/>
</dbReference>
<dbReference type="PRO" id="PR:Q9D666"/>
<dbReference type="Proteomes" id="UP000000589">
    <property type="component" value="Chromosome 5"/>
</dbReference>
<dbReference type="RNAct" id="Q9D666">
    <property type="molecule type" value="protein"/>
</dbReference>
<dbReference type="Bgee" id="ENSMUSG00000036817">
    <property type="expression patterns" value="Expressed in spermatocyte and 265 other cell types or tissues"/>
</dbReference>
<dbReference type="ExpressionAtlas" id="Q9D666">
    <property type="expression patterns" value="baseline and differential"/>
</dbReference>
<dbReference type="GO" id="GO:0002080">
    <property type="term" value="C:acrosomal membrane"/>
    <property type="evidence" value="ECO:0000314"/>
    <property type="project" value="MGI"/>
</dbReference>
<dbReference type="GO" id="GO:0000781">
    <property type="term" value="C:chromosome, telomeric region"/>
    <property type="evidence" value="ECO:0000314"/>
    <property type="project" value="MGI"/>
</dbReference>
<dbReference type="GO" id="GO:0005737">
    <property type="term" value="C:cytoplasm"/>
    <property type="evidence" value="ECO:0000314"/>
    <property type="project" value="MGI"/>
</dbReference>
<dbReference type="GO" id="GO:0034993">
    <property type="term" value="C:meiotic nuclear membrane microtubule tethering complex"/>
    <property type="evidence" value="ECO:0007669"/>
    <property type="project" value="Ensembl"/>
</dbReference>
<dbReference type="GO" id="GO:0016020">
    <property type="term" value="C:membrane"/>
    <property type="evidence" value="ECO:0000314"/>
    <property type="project" value="MGI"/>
</dbReference>
<dbReference type="GO" id="GO:0005635">
    <property type="term" value="C:nuclear envelope"/>
    <property type="evidence" value="ECO:0000314"/>
    <property type="project" value="MGI"/>
</dbReference>
<dbReference type="GO" id="GO:0005637">
    <property type="term" value="C:nuclear inner membrane"/>
    <property type="evidence" value="ECO:0000314"/>
    <property type="project" value="MGI"/>
</dbReference>
<dbReference type="GO" id="GO:0005634">
    <property type="term" value="C:nucleus"/>
    <property type="evidence" value="ECO:0000314"/>
    <property type="project" value="MGI"/>
</dbReference>
<dbReference type="GO" id="GO:0002081">
    <property type="term" value="C:outer acrosomal membrane"/>
    <property type="evidence" value="ECO:0007669"/>
    <property type="project" value="UniProtKB-SubCell"/>
</dbReference>
<dbReference type="GO" id="GO:0140444">
    <property type="term" value="F:cytoskeleton-nuclear membrane anchor activity"/>
    <property type="evidence" value="ECO:0007669"/>
    <property type="project" value="Ensembl"/>
</dbReference>
<dbReference type="GO" id="GO:0042802">
    <property type="term" value="F:identical protein binding"/>
    <property type="evidence" value="ECO:0007669"/>
    <property type="project" value="Ensembl"/>
</dbReference>
<dbReference type="GO" id="GO:0005521">
    <property type="term" value="F:lamin binding"/>
    <property type="evidence" value="ECO:0000314"/>
    <property type="project" value="UniProtKB"/>
</dbReference>
<dbReference type="GO" id="GO:0051642">
    <property type="term" value="P:centrosome localization"/>
    <property type="evidence" value="ECO:0000315"/>
    <property type="project" value="UniProtKB"/>
</dbReference>
<dbReference type="GO" id="GO:0007129">
    <property type="term" value="P:homologous chromosome pairing at meiosis"/>
    <property type="evidence" value="ECO:0000315"/>
    <property type="project" value="MGI"/>
</dbReference>
<dbReference type="GO" id="GO:0070197">
    <property type="term" value="P:meiotic attachment of telomere to nuclear envelope"/>
    <property type="evidence" value="ECO:0000315"/>
    <property type="project" value="UniProtKB"/>
</dbReference>
<dbReference type="GO" id="GO:0006998">
    <property type="term" value="P:nuclear envelope organization"/>
    <property type="evidence" value="ECO:0000266"/>
    <property type="project" value="MGI"/>
</dbReference>
<dbReference type="GO" id="GO:0090292">
    <property type="term" value="P:nuclear matrix anchoring at nuclear membrane"/>
    <property type="evidence" value="ECO:0007669"/>
    <property type="project" value="Ensembl"/>
</dbReference>
<dbReference type="GO" id="GO:0021817">
    <property type="term" value="P:nucleokinesis involved in cell motility in cerebral cortex radial glia guided migration"/>
    <property type="evidence" value="ECO:0000315"/>
    <property type="project" value="UniProtKB"/>
</dbReference>
<dbReference type="GO" id="GO:0007283">
    <property type="term" value="P:spermatogenesis"/>
    <property type="evidence" value="ECO:0007669"/>
    <property type="project" value="UniProtKB-KW"/>
</dbReference>
<dbReference type="CDD" id="cd21439">
    <property type="entry name" value="SUN1_cc1"/>
    <property type="match status" value="1"/>
</dbReference>
<dbReference type="FunFam" id="2.60.120.260:FF:000009">
    <property type="entry name" value="SUN domain-containing protein 1 isoform X1"/>
    <property type="match status" value="1"/>
</dbReference>
<dbReference type="Gene3D" id="2.60.120.260">
    <property type="entry name" value="Galactose-binding domain-like"/>
    <property type="match status" value="1"/>
</dbReference>
<dbReference type="InterPro" id="IPR045119">
    <property type="entry name" value="SUN1-5"/>
</dbReference>
<dbReference type="InterPro" id="IPR032680">
    <property type="entry name" value="SUN1_N"/>
</dbReference>
<dbReference type="InterPro" id="IPR040994">
    <property type="entry name" value="Sun_CC2"/>
</dbReference>
<dbReference type="InterPro" id="IPR012919">
    <property type="entry name" value="SUN_dom"/>
</dbReference>
<dbReference type="PANTHER" id="PTHR12911">
    <property type="entry name" value="SAD1/UNC-84-LIKE PROTEIN-RELATED"/>
    <property type="match status" value="1"/>
</dbReference>
<dbReference type="PANTHER" id="PTHR12911:SF23">
    <property type="entry name" value="SUN DOMAIN-CONTAINING PROTEIN 1"/>
    <property type="match status" value="1"/>
</dbReference>
<dbReference type="Pfam" id="PF18580">
    <property type="entry name" value="HTH_SUN2"/>
    <property type="match status" value="1"/>
</dbReference>
<dbReference type="Pfam" id="PF09387">
    <property type="entry name" value="MRP"/>
    <property type="match status" value="1"/>
</dbReference>
<dbReference type="Pfam" id="PF07738">
    <property type="entry name" value="Sad1_UNC"/>
    <property type="match status" value="1"/>
</dbReference>
<dbReference type="PROSITE" id="PS51469">
    <property type="entry name" value="SUN"/>
    <property type="match status" value="1"/>
</dbReference>
<keyword id="KW-0002">3D-structure</keyword>
<keyword id="KW-0025">Alternative splicing</keyword>
<keyword id="KW-0175">Coiled coil</keyword>
<keyword id="KW-0968">Cytoplasmic vesicle</keyword>
<keyword id="KW-0221">Differentiation</keyword>
<keyword id="KW-1015">Disulfide bond</keyword>
<keyword id="KW-0469">Meiosis</keyword>
<keyword id="KW-0472">Membrane</keyword>
<keyword id="KW-0539">Nucleus</keyword>
<keyword id="KW-0597">Phosphoprotein</keyword>
<keyword id="KW-1185">Reference proteome</keyword>
<keyword id="KW-0735">Signal-anchor</keyword>
<keyword id="KW-0744">Spermatogenesis</keyword>
<keyword id="KW-0812">Transmembrane</keyword>
<keyword id="KW-1133">Transmembrane helix</keyword>
<reference key="1">
    <citation type="journal article" date="2006" name="DNA Cell Biol.">
        <title>Characterization of the structures involved in localization of the SUN proteins to the nuclear envelope and the centrosome.</title>
        <authorList>
            <person name="Wang Q."/>
            <person name="Du X."/>
            <person name="Cai Z."/>
            <person name="Greene M.I."/>
        </authorList>
    </citation>
    <scope>NUCLEOTIDE SEQUENCE [MRNA] (ISOFORM 4)</scope>
    <scope>SUBUNIT</scope>
    <scope>SUBCELLULAR LOCATION</scope>
    <scope>ASSOCIATION WITH THE CENTROSOME</scope>
    <scope>TISSUE SPECIFICITY</scope>
</reference>
<reference key="2">
    <citation type="journal article" date="2010" name="PLoS ONE">
        <title>Mammalian sperm head formation involves different polarization of two novel LINC complexes.</title>
        <authorList>
            <person name="Gob E."/>
            <person name="Schmitt J."/>
            <person name="Benavente R."/>
            <person name="Alsheimer M."/>
        </authorList>
    </citation>
    <scope>NUCLEOTIDE SEQUENCE [MRNA] (ISOFORM 5)</scope>
    <scope>SUBCELLULAR LOCATION</scope>
    <scope>SUBUNIT</scope>
    <scope>TISSUE SPECIFICITY (ISOFORM 5)</scope>
    <scope>FUNCTION</scope>
    <source>
        <strain>C57BL/6J</strain>
        <tissue>Testis</tissue>
    </source>
</reference>
<reference key="3">
    <citation type="journal article" date="2005" name="Science">
        <title>The transcriptional landscape of the mammalian genome.</title>
        <authorList>
            <person name="Carninci P."/>
            <person name="Kasukawa T."/>
            <person name="Katayama S."/>
            <person name="Gough J."/>
            <person name="Frith M.C."/>
            <person name="Maeda N."/>
            <person name="Oyama R."/>
            <person name="Ravasi T."/>
            <person name="Lenhard B."/>
            <person name="Wells C."/>
            <person name="Kodzius R."/>
            <person name="Shimokawa K."/>
            <person name="Bajic V.B."/>
            <person name="Brenner S.E."/>
            <person name="Batalov S."/>
            <person name="Forrest A.R."/>
            <person name="Zavolan M."/>
            <person name="Davis M.J."/>
            <person name="Wilming L.G."/>
            <person name="Aidinis V."/>
            <person name="Allen J.E."/>
            <person name="Ambesi-Impiombato A."/>
            <person name="Apweiler R."/>
            <person name="Aturaliya R.N."/>
            <person name="Bailey T.L."/>
            <person name="Bansal M."/>
            <person name="Baxter L."/>
            <person name="Beisel K.W."/>
            <person name="Bersano T."/>
            <person name="Bono H."/>
            <person name="Chalk A.M."/>
            <person name="Chiu K.P."/>
            <person name="Choudhary V."/>
            <person name="Christoffels A."/>
            <person name="Clutterbuck D.R."/>
            <person name="Crowe M.L."/>
            <person name="Dalla E."/>
            <person name="Dalrymple B.P."/>
            <person name="de Bono B."/>
            <person name="Della Gatta G."/>
            <person name="di Bernardo D."/>
            <person name="Down T."/>
            <person name="Engstrom P."/>
            <person name="Fagiolini M."/>
            <person name="Faulkner G."/>
            <person name="Fletcher C.F."/>
            <person name="Fukushima T."/>
            <person name="Furuno M."/>
            <person name="Futaki S."/>
            <person name="Gariboldi M."/>
            <person name="Georgii-Hemming P."/>
            <person name="Gingeras T.R."/>
            <person name="Gojobori T."/>
            <person name="Green R.E."/>
            <person name="Gustincich S."/>
            <person name="Harbers M."/>
            <person name="Hayashi Y."/>
            <person name="Hensch T.K."/>
            <person name="Hirokawa N."/>
            <person name="Hill D."/>
            <person name="Huminiecki L."/>
            <person name="Iacono M."/>
            <person name="Ikeo K."/>
            <person name="Iwama A."/>
            <person name="Ishikawa T."/>
            <person name="Jakt M."/>
            <person name="Kanapin A."/>
            <person name="Katoh M."/>
            <person name="Kawasawa Y."/>
            <person name="Kelso J."/>
            <person name="Kitamura H."/>
            <person name="Kitano H."/>
            <person name="Kollias G."/>
            <person name="Krishnan S.P."/>
            <person name="Kruger A."/>
            <person name="Kummerfeld S.K."/>
            <person name="Kurochkin I.V."/>
            <person name="Lareau L.F."/>
            <person name="Lazarevic D."/>
            <person name="Lipovich L."/>
            <person name="Liu J."/>
            <person name="Liuni S."/>
            <person name="McWilliam S."/>
            <person name="Madan Babu M."/>
            <person name="Madera M."/>
            <person name="Marchionni L."/>
            <person name="Matsuda H."/>
            <person name="Matsuzawa S."/>
            <person name="Miki H."/>
            <person name="Mignone F."/>
            <person name="Miyake S."/>
            <person name="Morris K."/>
            <person name="Mottagui-Tabar S."/>
            <person name="Mulder N."/>
            <person name="Nakano N."/>
            <person name="Nakauchi H."/>
            <person name="Ng P."/>
            <person name="Nilsson R."/>
            <person name="Nishiguchi S."/>
            <person name="Nishikawa S."/>
            <person name="Nori F."/>
            <person name="Ohara O."/>
            <person name="Okazaki Y."/>
            <person name="Orlando V."/>
            <person name="Pang K.C."/>
            <person name="Pavan W.J."/>
            <person name="Pavesi G."/>
            <person name="Pesole G."/>
            <person name="Petrovsky N."/>
            <person name="Piazza S."/>
            <person name="Reed J."/>
            <person name="Reid J.F."/>
            <person name="Ring B.Z."/>
            <person name="Ringwald M."/>
            <person name="Rost B."/>
            <person name="Ruan Y."/>
            <person name="Salzberg S.L."/>
            <person name="Sandelin A."/>
            <person name="Schneider C."/>
            <person name="Schoenbach C."/>
            <person name="Sekiguchi K."/>
            <person name="Semple C.A."/>
            <person name="Seno S."/>
            <person name="Sessa L."/>
            <person name="Sheng Y."/>
            <person name="Shibata Y."/>
            <person name="Shimada H."/>
            <person name="Shimada K."/>
            <person name="Silva D."/>
            <person name="Sinclair B."/>
            <person name="Sperling S."/>
            <person name="Stupka E."/>
            <person name="Sugiura K."/>
            <person name="Sultana R."/>
            <person name="Takenaka Y."/>
            <person name="Taki K."/>
            <person name="Tammoja K."/>
            <person name="Tan S.L."/>
            <person name="Tang S."/>
            <person name="Taylor M.S."/>
            <person name="Tegner J."/>
            <person name="Teichmann S.A."/>
            <person name="Ueda H.R."/>
            <person name="van Nimwegen E."/>
            <person name="Verardo R."/>
            <person name="Wei C.L."/>
            <person name="Yagi K."/>
            <person name="Yamanishi H."/>
            <person name="Zabarovsky E."/>
            <person name="Zhu S."/>
            <person name="Zimmer A."/>
            <person name="Hide W."/>
            <person name="Bult C."/>
            <person name="Grimmond S.M."/>
            <person name="Teasdale R.D."/>
            <person name="Liu E.T."/>
            <person name="Brusic V."/>
            <person name="Quackenbush J."/>
            <person name="Wahlestedt C."/>
            <person name="Mattick J.S."/>
            <person name="Hume D.A."/>
            <person name="Kai C."/>
            <person name="Sasaki D."/>
            <person name="Tomaru Y."/>
            <person name="Fukuda S."/>
            <person name="Kanamori-Katayama M."/>
            <person name="Suzuki M."/>
            <person name="Aoki J."/>
            <person name="Arakawa T."/>
            <person name="Iida J."/>
            <person name="Imamura K."/>
            <person name="Itoh M."/>
            <person name="Kato T."/>
            <person name="Kawaji H."/>
            <person name="Kawagashira N."/>
            <person name="Kawashima T."/>
            <person name="Kojima M."/>
            <person name="Kondo S."/>
            <person name="Konno H."/>
            <person name="Nakano K."/>
            <person name="Ninomiya N."/>
            <person name="Nishio T."/>
            <person name="Okada M."/>
            <person name="Plessy C."/>
            <person name="Shibata K."/>
            <person name="Shiraki T."/>
            <person name="Suzuki S."/>
            <person name="Tagami M."/>
            <person name="Waki K."/>
            <person name="Watahiki A."/>
            <person name="Okamura-Oho Y."/>
            <person name="Suzuki H."/>
            <person name="Kawai J."/>
            <person name="Hayashizaki Y."/>
        </authorList>
    </citation>
    <scope>NUCLEOTIDE SEQUENCE [LARGE SCALE MRNA] (ISOFORMS 1; 2 AND 3)</scope>
    <source>
        <strain>C57BL/6J</strain>
        <tissue>Cerebellum</tissue>
        <tissue>Embryo</tissue>
        <tissue>Placenta</tissue>
        <tissue>Skin</tissue>
    </source>
</reference>
<reference key="4">
    <citation type="journal article" date="2009" name="PLoS Biol.">
        <title>Lineage-specific biology revealed by a finished genome assembly of the mouse.</title>
        <authorList>
            <person name="Church D.M."/>
            <person name="Goodstadt L."/>
            <person name="Hillier L.W."/>
            <person name="Zody M.C."/>
            <person name="Goldstein S."/>
            <person name="She X."/>
            <person name="Bult C.J."/>
            <person name="Agarwala R."/>
            <person name="Cherry J.L."/>
            <person name="DiCuccio M."/>
            <person name="Hlavina W."/>
            <person name="Kapustin Y."/>
            <person name="Meric P."/>
            <person name="Maglott D."/>
            <person name="Birtle Z."/>
            <person name="Marques A.C."/>
            <person name="Graves T."/>
            <person name="Zhou S."/>
            <person name="Teague B."/>
            <person name="Potamousis K."/>
            <person name="Churas C."/>
            <person name="Place M."/>
            <person name="Herschleb J."/>
            <person name="Runnheim R."/>
            <person name="Forrest D."/>
            <person name="Amos-Landgraf J."/>
            <person name="Schwartz D.C."/>
            <person name="Cheng Z."/>
            <person name="Lindblad-Toh K."/>
            <person name="Eichler E.E."/>
            <person name="Ponting C.P."/>
        </authorList>
    </citation>
    <scope>NUCLEOTIDE SEQUENCE [LARGE SCALE GENOMIC DNA]</scope>
    <source>
        <strain>C57BL/6J</strain>
    </source>
</reference>
<reference key="5">
    <citation type="journal article" date="2004" name="Genome Res.">
        <title>The status, quality, and expansion of the NIH full-length cDNA project: the Mammalian Gene Collection (MGC).</title>
        <authorList>
            <consortium name="The MGC Project Team"/>
        </authorList>
    </citation>
    <scope>NUCLEOTIDE SEQUENCE [LARGE SCALE MRNA] (ISOFORM 1)</scope>
    <source>
        <strain>C57BL/6J</strain>
        <strain>FVB/N</strain>
        <strain>FVB/N-3</strain>
        <tissue>Brain</tissue>
        <tissue>Mammary tumor</tissue>
    </source>
</reference>
<reference key="6">
    <citation type="journal article" date="2002" name="Genomics">
        <title>Identification and characterization of cDNAs encoding four novel proteins that interact with translin associated factor-X.</title>
        <authorList>
            <person name="Bray J.D."/>
            <person name="Chennathukuzhi V.M."/>
            <person name="Hecht N.B."/>
        </authorList>
    </citation>
    <scope>NUCLEOTIDE SEQUENCE [MRNA] OF 605-913</scope>
    <scope>SUBCELLULAR LOCATION</scope>
    <scope>TISSUE SPECIFICITY</scope>
    <scope>INTERACTION WITH TSNAX</scope>
    <source>
        <tissue>Testis</tissue>
    </source>
</reference>
<reference key="7">
    <citation type="journal article" date="2001" name="Proc. Natl. Acad. Sci. U.S.A.">
        <title>Nuclear envelope proteomics: novel integral membrane proteins of the inner nuclear membrane.</title>
        <authorList>
            <person name="Dreger M."/>
            <person name="Bengtsson L."/>
            <person name="Schoeneberg T."/>
            <person name="Otto H."/>
            <person name="Hucho F."/>
        </authorList>
    </citation>
    <scope>IDENTIFICATION BY MASS SPECTROMETRY</scope>
    <scope>SUBCELLULAR LOCATION</scope>
</reference>
<reference key="8">
    <citation type="journal article" date="2006" name="J. Cell Biol.">
        <title>Coupling of the nucleus and cytoplasm: role of the LINC complex.</title>
        <authorList>
            <person name="Crisp M."/>
            <person name="Liu Q."/>
            <person name="Roux K."/>
            <person name="Rattner J.B."/>
            <person name="Shanahan C."/>
            <person name="Burke B."/>
            <person name="Stahl P.D."/>
            <person name="Hodzic D."/>
        </authorList>
    </citation>
    <scope>FUNCTION OF THE LINC COMPLEX</scope>
    <scope>INTERACTION WITH LAMINS AND SYNE2</scope>
    <scope>SUBCELLULAR LOCATION</scope>
    <scope>TOPOLOGY</scope>
    <scope>TISSUE SPECIFICITY</scope>
</reference>
<reference key="9">
    <citation type="journal article" date="2006" name="Mol. Cell. Biol.">
        <title>SUN1 interacts with nuclear lamin A and cytoplasmic nesprins to provide a physical connection between the nuclear lamina and the cytoskeleton.</title>
        <authorList>
            <person name="Haque F."/>
            <person name="Lloyd D.J."/>
            <person name="Smallwood D.T."/>
            <person name="Dent C.L."/>
            <person name="Shanahan C.M."/>
            <person name="Fry A.M."/>
            <person name="Trembath R.C."/>
            <person name="Shackleton S."/>
        </authorList>
    </citation>
    <scope>SUBCELLULAR LOCATION</scope>
    <scope>TOPOLOGY</scope>
    <scope>INTERACTION WITH LMNA; SYNE1 AND SYNE2</scope>
</reference>
<reference key="10">
    <citation type="journal article" date="2007" name="Dev. Cell">
        <title>SUN1 is required for telomere attachment to nuclear envelope and gametogenesis in mice.</title>
        <authorList>
            <person name="Ding X."/>
            <person name="Xu R."/>
            <person name="Yu J."/>
            <person name="Xu T."/>
            <person name="Zhuang Y."/>
            <person name="Han M."/>
        </authorList>
    </citation>
    <scope>FUNCTION</scope>
</reference>
<reference key="11">
    <citation type="journal article" date="2007" name="J. Cell Biol.">
        <title>Functional association of Sun1 with nuclear pore complexes.</title>
        <authorList>
            <person name="Liu Q."/>
            <person name="Pante N."/>
            <person name="Misteli T."/>
            <person name="Elsagga M."/>
            <person name="Crisp M."/>
            <person name="Hodzic D."/>
            <person name="Burke B."/>
            <person name="Roux K.J."/>
        </authorList>
    </citation>
    <scope>SUBCELLULAR LOCATION</scope>
    <scope>FUNCTION</scope>
    <scope>ASSOCIATION WITH THE NUCLEAR PORE COMPLEX</scope>
</reference>
<reference key="12">
    <citation type="journal article" date="2008" name="Biochim. Biophys. Acta">
        <title>Sun1 forms immobile macromolecular assemblies at the nuclear envelope.</title>
        <authorList>
            <person name="Lu W."/>
            <person name="Gotzmann J."/>
            <person name="Sironi L."/>
            <person name="Jaeger V.M."/>
            <person name="Schneider M."/>
            <person name="Luke Y."/>
            <person name="Uhlen M."/>
            <person name="Szigyarto C.A."/>
            <person name="Brachner A."/>
            <person name="Ellenberg J."/>
            <person name="Foisner R."/>
            <person name="Noegel A.A."/>
            <person name="Karakesisoglou I."/>
        </authorList>
    </citation>
    <scope>SUBCELLULAR LOCATION</scope>
    <scope>TOPOLOGY</scope>
    <scope>SUBUNIT</scope>
</reference>
<reference key="13">
    <citation type="journal article" date="2009" name="Development">
        <title>Requirement for Sun1 in the expression of meiotic reproductive genes and piRNA.</title>
        <authorList>
            <person name="Chi Y.H."/>
            <person name="Cheng L.I."/>
            <person name="Myers T."/>
            <person name="Ward J.M."/>
            <person name="Williams E."/>
            <person name="Su Q."/>
            <person name="Faucette L."/>
            <person name="Wang J.Y."/>
            <person name="Jeang K.T."/>
        </authorList>
    </citation>
    <scope>FUNCTION</scope>
</reference>
<reference key="14">
    <citation type="journal article" date="2009" name="J. Cell Biol.">
        <title>Cohesin SMC1beta protects telomeres in meiocytes.</title>
        <authorList>
            <person name="Adelfalk C."/>
            <person name="Janschek J."/>
            <person name="Revenkova E."/>
            <person name="Blei C."/>
            <person name="Liebe B."/>
            <person name="Gob E."/>
            <person name="Alsheimer M."/>
            <person name="Benavente R."/>
            <person name="de Boer E."/>
            <person name="Novak I."/>
            <person name="Hoog C."/>
            <person name="Scherthan H."/>
            <person name="Jessberger R."/>
        </authorList>
    </citation>
    <scope>SUBCELLULAR LOCATION</scope>
    <scope>ASSOCIATION WITH TELOMERES</scope>
</reference>
<reference key="15">
    <citation type="journal article" date="2009" name="J. Cell Sci.">
        <title>Dynamics and molecular interactions of linker of nucleoskeleton and cytoskeleton (LINC) complex proteins.</title>
        <authorList>
            <person name="Ostlund C."/>
            <person name="Folker E.S."/>
            <person name="Choi J.C."/>
            <person name="Gomes E.R."/>
            <person name="Gundersen G.G."/>
            <person name="Worman H.J."/>
        </authorList>
    </citation>
    <scope>SUBCELLULAR LOCATION</scope>
    <scope>INTERACTION WITH LMNA AND SYN2</scope>
</reference>
<reference key="16">
    <citation type="journal article" date="2009" name="Neuron">
        <title>SUN1/2 and Syne/Nesprin-1/2 complexes connect centrosome to the nucleus during neurogenesis and neuronal migration in mice.</title>
        <authorList>
            <person name="Zhang X."/>
            <person name="Lei K."/>
            <person name="Yuan X."/>
            <person name="Wu X."/>
            <person name="Zhuang Y."/>
            <person name="Xu T."/>
            <person name="Xu R."/>
            <person name="Han M."/>
        </authorList>
    </citation>
    <scope>FUNCTION</scope>
    <scope>SUBCELLULAR LOCATION</scope>
    <scope>INTERACTION WITH SYNE2</scope>
</reference>
<reference key="17">
    <citation type="journal article" date="2009" name="Proc. Natl. Acad. Sci. U.S.A.">
        <title>SUN1 and SUN2 play critical but partially redundant roles in anchoring nuclei in skeletal muscle cells in mice.</title>
        <authorList>
            <person name="Lei K."/>
            <person name="Zhang X."/>
            <person name="Ding X."/>
            <person name="Guo X."/>
            <person name="Chen M."/>
            <person name="Zhu B."/>
            <person name="Xu T."/>
            <person name="Zhuang Y."/>
            <person name="Xu R."/>
            <person name="Han M."/>
        </authorList>
    </citation>
    <scope>FUNCTION</scope>
</reference>
<reference key="18">
    <citation type="journal article" date="2010" name="Cell">
        <title>A tissue-specific atlas of mouse protein phosphorylation and expression.</title>
        <authorList>
            <person name="Huttlin E.L."/>
            <person name="Jedrychowski M.P."/>
            <person name="Elias J.E."/>
            <person name="Goswami T."/>
            <person name="Rad R."/>
            <person name="Beausoleil S.A."/>
            <person name="Villen J."/>
            <person name="Haas W."/>
            <person name="Sowa M.E."/>
            <person name="Gygi S.P."/>
        </authorList>
    </citation>
    <scope>PHOSPHORYLATION [LARGE SCALE ANALYSIS] AT SER-66</scope>
    <scope>IDENTIFICATION BY MASS SPECTROMETRY [LARGE SCALE ANALYSIS]</scope>
    <source>
        <tissue>Testis</tissue>
    </source>
</reference>
<reference key="19">
    <citation type="journal article" date="2010" name="J. Biol. Chem.">
        <title>Mammalian SUN protein interaction networks at the inner nuclear membrane and their role in laminopathy disease processes.</title>
        <authorList>
            <person name="Haque F."/>
            <person name="Mazzeo D."/>
            <person name="Patel J.T."/>
            <person name="Smallwood D.T."/>
            <person name="Ellis J.A."/>
            <person name="Shanahan C.M."/>
            <person name="Shackleton S."/>
        </authorList>
    </citation>
    <scope>INTERACTION WITH EMD; LMNA AND SYNE2</scope>
</reference>
<reference key="20">
    <citation type="journal article" date="2011" name="Commun. Integr. Biol.">
        <title>Expression of individual mammalian Sun1 isoforms depends on the cell type.</title>
        <authorList>
            <person name="Goeb E."/>
            <person name="Meyer-Natus E."/>
            <person name="Benavente R."/>
            <person name="Alsheimer M."/>
        </authorList>
    </citation>
    <scope>ALTERNATIVE SPLICING</scope>
    <scope>TISSUE SPECIFICITY</scope>
</reference>
<reference key="21">
    <citation type="journal article" date="2012" name="J. Cell Biol.">
        <title>A conserved KASH domain protein associates with telomeres, SUN1, and dynactin during mammalian meiosis.</title>
        <authorList>
            <person name="Morimoto A."/>
            <person name="Shibuya H."/>
            <person name="Zhu X."/>
            <person name="Kim J."/>
            <person name="Ishiguro K."/>
            <person name="Han M."/>
            <person name="Watanabe Y."/>
        </authorList>
    </citation>
    <scope>INTERACTION WITH KASH5</scope>
</reference>
<reference key="22">
    <citation type="journal article" date="2013" name="J. Cell Biol.">
        <title>A mammalian KASH domain protein coupling meiotic chromosomes to the cytoskeleton.</title>
        <authorList>
            <person name="Horn H.F."/>
            <person name="Kim D.I."/>
            <person name="Wright G.D."/>
            <person name="Wong E.S."/>
            <person name="Stewart C.L."/>
            <person name="Burke B."/>
            <person name="Roux K.J."/>
        </authorList>
    </citation>
    <scope>FUNCTION</scope>
    <scope>SUBUNIT</scope>
</reference>
<reference key="23">
    <citation type="journal article" date="2013" name="J. Clin. Invest.">
        <title>The LINC complex is essential for hearing.</title>
        <authorList>
            <person name="Horn H.F."/>
            <person name="Brownstein Z."/>
            <person name="Lenz D.R."/>
            <person name="Shivatzki S."/>
            <person name="Dror A.A."/>
            <person name="Dagan-Rosenfeld O."/>
            <person name="Friedman L.M."/>
            <person name="Roux K.J."/>
            <person name="Kozlov S."/>
            <person name="Jeang K.T."/>
            <person name="Frydman M."/>
            <person name="Burke B."/>
            <person name="Stewart C.L."/>
            <person name="Avraham K.B."/>
        </authorList>
    </citation>
    <scope>FUNCTION</scope>
    <scope>DISRUPTION PHENOTYPE</scope>
    <scope>SUBCELLULAR LOCATION</scope>
    <scope>TISSUE SPECIFICITY</scope>
</reference>
<reference key="24">
    <citation type="journal article" date="2014" name="Nat. Cell Biol.">
        <title>The TRF1-binding protein TERB1 promotes chromosome movement and telomere rigidity in meiosis.</title>
        <authorList>
            <person name="Shibuya H."/>
            <person name="Ishiguro K.I."/>
            <person name="Watanabe Y."/>
        </authorList>
    </citation>
    <scope>INTERACTION WITH CCDC79</scope>
</reference>
<reference key="25">
    <citation type="journal article" date="2015" name="Cell Rep.">
        <title>Mechanism and regulation of rapid telomere prophase movements in mouse meiotic chromosomes.</title>
        <authorList>
            <person name="Lee C.Y."/>
            <person name="Horn H.F."/>
            <person name="Stewart C.L."/>
            <person name="Burke B."/>
            <person name="Bolcun-Filas E."/>
            <person name="Schimenti J.C."/>
            <person name="Dresser M.E."/>
            <person name="Pezza R.J."/>
        </authorList>
    </citation>
    <scope>FUNCTION</scope>
</reference>
<reference key="26">
    <citation type="journal article" date="2016" name="Sci. Rep.">
        <title>Depletion of the LINC complex disrupts cytoskeleton dynamics and meiotic resumption in mouse oocytes.</title>
        <authorList>
            <person name="Luo Y."/>
            <person name="Lee I.W."/>
            <person name="Jo Y.J."/>
            <person name="Namgoong S."/>
            <person name="Kim N.H."/>
        </authorList>
    </citation>
    <scope>FUNCTION</scope>
    <scope>SUBCELLULAR LOCATION</scope>
</reference>
<reference key="27">
    <citation type="journal article" date="2018" name="J. Biochem.">
        <title>Jaw1/LRMP has a role in maintaining nuclear shape via interaction with SUN proteins.</title>
        <authorList>
            <person name="Kozono T."/>
            <person name="Tadahira K."/>
            <person name="Okumura W."/>
            <person name="Itai N."/>
            <person name="Tamura-Nakano M."/>
            <person name="Dohi T."/>
            <person name="Tonozuka T."/>
            <person name="Nishikawa A."/>
        </authorList>
    </citation>
    <scope>INTERACTION WITH IRAG2</scope>
</reference>
<comment type="function">
    <text evidence="1 9 12 13 15 16 19 21 23 24 26 27">As a component of the LINC (LInker of Nucleoskeleton and Cytoskeleton) complex involved in the connection between the nuclear lamina and the cytoskeleton (PubMed:16380439, PubMed:20711465, PubMed:24062341, PubMed:25892231, PubMed:26842404). The nucleocytoplasmic interactions established by the LINC complex play an important role in the transmission of mechanical forces across the nuclear envelope and in nuclear movement and positioning (PubMed:19874786). Required for interkinetic nuclear migration (INM) and essential for nucleokinesis and centrosome-nucleus coupling during radial neuronal migration in the cerebral cortex and during glial migration (PubMed:19874786). Involved in telomere attachment to nuclear envelope in the prophase of meiosis implicating a SUN1/2:KASH5 LINC complex in which SUN1 and SUN2 seem to act at least partial redundantly (PubMed:17543860, PubMed:19211677, PubMed:19509342, PubMed:24062341, PubMed:25892231, PubMed:26842404). Required for gametogenesis and involved in selective gene expression of coding and non-coding RNAs needed for gametogenesis (PubMed:17543860). Helps to define the distribution of nuclear pore complexes (NPCs) (PubMed:17724119). Required for efficient localization of SYNE4 in the nuclear envelope (PubMed:23348741). May be involved in nuclear remodeling during sperm head formation in spermatogenesis (PubMed:20711465). May play a role in DNA repair by suppressing non-homologous end joining repair to facilitate the repair of DNA cross-links (By similarity).</text>
</comment>
<comment type="function">
    <text evidence="33">Isoform 5 may be involved in nuclear remodeling during sperm head formation in spermatogenesis. A probable SUN1 isoform 5:SYNE3 LINC complex may tether spermatid nuclei to anterior cytoskeletal structures such as actin filaments present at membraneous junctions of spermatids and Sertoli cells.</text>
</comment>
<comment type="subunit">
    <text evidence="1 8 9 10 11 14 18 19 20 22 25 28">Core component of the LINC complex which is composed of inner nuclear membrane SUN domain-containing proteins coupled to outer nuclear membrane KASH domain-containing nesprins. SUN and KASH domain-containing proteins seem to bind each other promiscuously; however, differentially expression of LINC complex constituents is giving rise to specific assemblies. At least SUN1/2-containing core LINC complexes are proposed to be hexameric composed of three protomers of each KASH and SUN domain-containing protein. Interacts with KASH5 (via the last 22 amino acids); this interaction mediates KASH5 telomere localization by forming a SUN1:KASH5 LINC complex. Isoform 5 is proposed to form a non-nuclear spermatogenesis-specific LINC complex with SYNE3 during sperm head formation. Interacts with SYNE2 and SYNE1; probably forming respective LINC complexes. Interacts with A-type lamin with a strong preference for unprocessed A-type lamin compared with the mature protein. Interaction with lamins B1 and C is hardly detectable. Interacts with NAT10. Interacts with EMD and TSNAX. Associates with the nuclear pore complex (NPC). Interacts with CCDC79/TERB1; promoting the accumulation of the LINC complex complexes at the telomere-nuclear envelope attachment sites. Interacts with IRAG2 (PubMed:29878215). Interacts (via KASH domain) with TMEM258 (By similarity).</text>
</comment>
<comment type="interaction">
    <interactant intactId="EBI-6752574">
        <id>Q9D666</id>
    </interactant>
    <interactant intactId="EBI-11666341">
        <id>Q80VJ8</id>
        <label>Kash5</label>
    </interactant>
    <organismsDiffer>false</organismsDiffer>
    <experiments>4</experiments>
</comment>
<comment type="interaction">
    <interactant intactId="EBI-6752574">
        <id>Q9D666</id>
    </interactant>
    <interactant intactId="EBI-11707325">
        <id>Q8C0V1</id>
        <label>Terb1</label>
    </interactant>
    <organismsDiffer>false</organismsDiffer>
    <experiments>2</experiments>
</comment>
<comment type="interaction">
    <interactant intactId="EBI-6752574">
        <id>Q9D666</id>
    </interactant>
    <interactant intactId="EBI-489887">
        <id>P50402</id>
        <label>EMD</label>
    </interactant>
    <organismsDiffer>true</organismsDiffer>
    <experiments>4</experiments>
</comment>
<comment type="interaction">
    <interactant intactId="EBI-6752574">
        <id>Q9D666</id>
    </interactant>
    <interactant intactId="EBI-6838657">
        <id>Q8WXH0-4</id>
        <label>SYNE2</label>
    </interactant>
    <organismsDiffer>true</organismsDiffer>
    <experiments>2</experiments>
</comment>
<comment type="subcellular location">
    <subcellularLocation>
        <location evidence="7 8 9 10 11 13 14 17 18 19 23">Nucleus inner membrane</location>
        <topology evidence="7 8 9 10 11 13 14 17 18 19 23">Single-pass type II membrane protein</topology>
    </subcellularLocation>
    <text evidence="21 27">At oocyte MI stage localized around the spindle, at MII stage localized to the spindle poles. In round spermatids mainly localizes to the posterior pole of the nucleus. This localization is gradually disappearing during spermiogenesis. In elongated spermatids localizes to anterior regions outside the nucleus indicative for isoform 5.</text>
</comment>
<comment type="subcellular location">
    <molecule>Isoform 5</molecule>
    <subcellularLocation>
        <location evidence="33">Cytoplasmic vesicle</location>
        <location evidence="33">Secretory vesicle</location>
        <location evidence="33">Acrosome outer membrane</location>
    </subcellularLocation>
    <text evidence="33">Localized to the anterior pole of spermatids.</text>
</comment>
<comment type="alternative products">
    <event type="alternative splicing"/>
    <isoform>
        <id>Q9D666-1</id>
        <name>1</name>
        <name>alpha</name>
        <sequence type="displayed"/>
    </isoform>
    <isoform>
        <id>Q9D666-2</id>
        <name>2</name>
        <name>zeta</name>
        <sequence type="described" ref="VSP_009346"/>
    </isoform>
    <isoform>
        <id>Q9D666-3</id>
        <name>3</name>
        <name>beta</name>
        <sequence type="described" ref="VSP_009347"/>
    </isoform>
    <isoform>
        <id>Q9D666-4</id>
        <name>4</name>
        <name>delta</name>
        <sequence type="described" ref="VSP_039552"/>
    </isoform>
    <isoform>
        <id>Q9D666-5</id>
        <name>5</name>
        <name>eta</name>
        <sequence type="described" ref="VSP_058699"/>
    </isoform>
    <text>Seven isoforms have been found to be expressed.</text>
</comment>
<comment type="tissue specificity">
    <text evidence="8 9 11 23">Widely expressed. Expressed in cochlear outer hair cells (at protein level). Seven isoforms are expressed in testis including testis-specific isoform 5. Isoform 5 is the only isoform expressed at the end of sperm differentiation. Six isoforms are expressed in muscle, heart and brain, four isoforms in kidney and three isoforms in liver.</text>
</comment>
<comment type="domain">
    <text evidence="2 3">The coiled coil domains differentially mediate trimerization required for binding to nesprins and are proposed to dynamically regulate the oligomeric state by locking the SUN domain in an inactive confirmation. The coiled coil domains are proposed to be involved in load-bearing and force transmission from the cytoskeleton.</text>
</comment>
<comment type="domain">
    <text evidence="1">The SUN domain may play a role in nuclear anchoring and/or migration.</text>
</comment>
<comment type="PTM">
    <text evidence="3">The disulfide bond with KASH domain-containing nesprins is required for stability of the respective LINC complexes under tensile forces.</text>
</comment>
<comment type="disruption phenotype">
    <text evidence="23">Mutant mice are viable, but display hearing loss at all frequencies.</text>
</comment>
<comment type="sequence caution" evidence="32">
    <conflict type="erroneous initiation">
        <sequence resource="EMBL-CDS" id="AAH30330"/>
    </conflict>
    <text>Extended N-terminus.</text>
</comment>
<evidence type="ECO:0000250" key="1">
    <source>
        <dbReference type="UniProtKB" id="O94901"/>
    </source>
</evidence>
<evidence type="ECO:0000250" key="2">
    <source>
        <dbReference type="UniProtKB" id="Q8BJS4"/>
    </source>
</evidence>
<evidence type="ECO:0000250" key="3">
    <source>
        <dbReference type="UniProtKB" id="Q9UH99"/>
    </source>
</evidence>
<evidence type="ECO:0000255" key="4"/>
<evidence type="ECO:0000255" key="5">
    <source>
        <dbReference type="PROSITE-ProRule" id="PRU00802"/>
    </source>
</evidence>
<evidence type="ECO:0000256" key="6">
    <source>
        <dbReference type="SAM" id="MobiDB-lite"/>
    </source>
</evidence>
<evidence type="ECO:0000269" key="7">
    <source>
    </source>
</evidence>
<evidence type="ECO:0000269" key="8">
    <source>
    </source>
</evidence>
<evidence type="ECO:0000269" key="9">
    <source>
    </source>
</evidence>
<evidence type="ECO:0000269" key="10">
    <source>
    </source>
</evidence>
<evidence type="ECO:0000269" key="11">
    <source>
    </source>
</evidence>
<evidence type="ECO:0000269" key="12">
    <source>
    </source>
</evidence>
<evidence type="ECO:0000269" key="13">
    <source>
    </source>
</evidence>
<evidence type="ECO:0000269" key="14">
    <source>
    </source>
</evidence>
<evidence type="ECO:0000269" key="15">
    <source>
    </source>
</evidence>
<evidence type="ECO:0000269" key="16">
    <source>
    </source>
</evidence>
<evidence type="ECO:0000269" key="17">
    <source>
    </source>
</evidence>
<evidence type="ECO:0000269" key="18">
    <source>
    </source>
</evidence>
<evidence type="ECO:0000269" key="19">
    <source>
    </source>
</evidence>
<evidence type="ECO:0000269" key="20">
    <source>
    </source>
</evidence>
<evidence type="ECO:0000269" key="21">
    <source>
    </source>
</evidence>
<evidence type="ECO:0000269" key="22">
    <source>
    </source>
</evidence>
<evidence type="ECO:0000269" key="23">
    <source>
    </source>
</evidence>
<evidence type="ECO:0000269" key="24">
    <source>
    </source>
</evidence>
<evidence type="ECO:0000269" key="25">
    <source>
    </source>
</evidence>
<evidence type="ECO:0000269" key="26">
    <source>
    </source>
</evidence>
<evidence type="ECO:0000269" key="27">
    <source>
    </source>
</evidence>
<evidence type="ECO:0000269" key="28">
    <source>
    </source>
</evidence>
<evidence type="ECO:0000303" key="29">
    <source>
    </source>
</evidence>
<evidence type="ECO:0000303" key="30">
    <source>
    </source>
</evidence>
<evidence type="ECO:0000303" key="31">
    <source>
    </source>
</evidence>
<evidence type="ECO:0000305" key="32"/>
<evidence type="ECO:0000305" key="33">
    <source>
    </source>
</evidence>
<evidence type="ECO:0000312" key="34">
    <source>
        <dbReference type="MGI" id="MGI:1924303"/>
    </source>
</evidence>
<evidence type="ECO:0007744" key="35">
    <source>
    </source>
</evidence>
<evidence type="ECO:0007829" key="36">
    <source>
        <dbReference type="PDB" id="5YWZ"/>
    </source>
</evidence>
<proteinExistence type="evidence at protein level"/>
<accession>Q9D666</accession>
<accession>D3Z0V9</accession>
<accession>Q3TIW3</accession>
<accession>Q3TV96</accession>
<accession>Q6B4H0</accession>
<accession>Q80SU8</accession>
<accession>Q8BZ99</accession>
<accession>Q99P23</accession>